<accession>B3H0S2</accession>
<protein>
    <recommendedName>
        <fullName evidence="1">3-hydroxyacyl-[acyl-carrier-protein] dehydratase FabZ</fullName>
        <ecNumber evidence="1">4.2.1.59</ecNumber>
    </recommendedName>
    <alternativeName>
        <fullName evidence="1">(3R)-hydroxymyristoyl-[acyl-carrier-protein] dehydratase</fullName>
        <shortName evidence="1">(3R)-hydroxymyristoyl-ACP dehydrase</shortName>
    </alternativeName>
    <alternativeName>
        <fullName evidence="1">Beta-hydroxyacyl-ACP dehydratase</fullName>
    </alternativeName>
</protein>
<name>FABZ_ACTP7</name>
<keyword id="KW-0963">Cytoplasm</keyword>
<keyword id="KW-0441">Lipid A biosynthesis</keyword>
<keyword id="KW-0444">Lipid biosynthesis</keyword>
<keyword id="KW-0443">Lipid metabolism</keyword>
<keyword id="KW-0456">Lyase</keyword>
<evidence type="ECO:0000255" key="1">
    <source>
        <dbReference type="HAMAP-Rule" id="MF_00406"/>
    </source>
</evidence>
<dbReference type="EC" id="4.2.1.59" evidence="1"/>
<dbReference type="EMBL" id="CP001091">
    <property type="protein sequence ID" value="ACE61084.1"/>
    <property type="molecule type" value="Genomic_DNA"/>
</dbReference>
<dbReference type="RefSeq" id="WP_005596447.1">
    <property type="nucleotide sequence ID" value="NC_010939.1"/>
</dbReference>
<dbReference type="SMR" id="B3H0S2"/>
<dbReference type="GeneID" id="48598576"/>
<dbReference type="KEGG" id="apa:APP7_0432"/>
<dbReference type="HOGENOM" id="CLU_078912_1_0_6"/>
<dbReference type="Proteomes" id="UP000001226">
    <property type="component" value="Chromosome"/>
</dbReference>
<dbReference type="GO" id="GO:0005737">
    <property type="term" value="C:cytoplasm"/>
    <property type="evidence" value="ECO:0007669"/>
    <property type="project" value="UniProtKB-SubCell"/>
</dbReference>
<dbReference type="GO" id="GO:0016020">
    <property type="term" value="C:membrane"/>
    <property type="evidence" value="ECO:0007669"/>
    <property type="project" value="GOC"/>
</dbReference>
<dbReference type="GO" id="GO:0019171">
    <property type="term" value="F:(3R)-hydroxyacyl-[acyl-carrier-protein] dehydratase activity"/>
    <property type="evidence" value="ECO:0007669"/>
    <property type="project" value="UniProtKB-EC"/>
</dbReference>
<dbReference type="GO" id="GO:0006633">
    <property type="term" value="P:fatty acid biosynthetic process"/>
    <property type="evidence" value="ECO:0007669"/>
    <property type="project" value="UniProtKB-UniRule"/>
</dbReference>
<dbReference type="GO" id="GO:0009245">
    <property type="term" value="P:lipid A biosynthetic process"/>
    <property type="evidence" value="ECO:0007669"/>
    <property type="project" value="UniProtKB-UniRule"/>
</dbReference>
<dbReference type="CDD" id="cd01288">
    <property type="entry name" value="FabZ"/>
    <property type="match status" value="1"/>
</dbReference>
<dbReference type="FunFam" id="3.10.129.10:FF:000001">
    <property type="entry name" value="3-hydroxyacyl-[acyl-carrier-protein] dehydratase FabZ"/>
    <property type="match status" value="1"/>
</dbReference>
<dbReference type="Gene3D" id="3.10.129.10">
    <property type="entry name" value="Hotdog Thioesterase"/>
    <property type="match status" value="1"/>
</dbReference>
<dbReference type="HAMAP" id="MF_00406">
    <property type="entry name" value="FabZ"/>
    <property type="match status" value="1"/>
</dbReference>
<dbReference type="InterPro" id="IPR013114">
    <property type="entry name" value="FabA_FabZ"/>
</dbReference>
<dbReference type="InterPro" id="IPR010084">
    <property type="entry name" value="FabZ"/>
</dbReference>
<dbReference type="InterPro" id="IPR029069">
    <property type="entry name" value="HotDog_dom_sf"/>
</dbReference>
<dbReference type="NCBIfam" id="TIGR01750">
    <property type="entry name" value="fabZ"/>
    <property type="match status" value="1"/>
</dbReference>
<dbReference type="NCBIfam" id="NF000582">
    <property type="entry name" value="PRK00006.1"/>
    <property type="match status" value="1"/>
</dbReference>
<dbReference type="PANTHER" id="PTHR30272">
    <property type="entry name" value="3-HYDROXYACYL-[ACYL-CARRIER-PROTEIN] DEHYDRATASE"/>
    <property type="match status" value="1"/>
</dbReference>
<dbReference type="PANTHER" id="PTHR30272:SF1">
    <property type="entry name" value="3-HYDROXYACYL-[ACYL-CARRIER-PROTEIN] DEHYDRATASE"/>
    <property type="match status" value="1"/>
</dbReference>
<dbReference type="Pfam" id="PF07977">
    <property type="entry name" value="FabA"/>
    <property type="match status" value="1"/>
</dbReference>
<dbReference type="SUPFAM" id="SSF54637">
    <property type="entry name" value="Thioesterase/thiol ester dehydrase-isomerase"/>
    <property type="match status" value="1"/>
</dbReference>
<reference key="1">
    <citation type="submission" date="2008-06" db="EMBL/GenBank/DDBJ databases">
        <title>Genome and proteome analysis of A. pleuropneumoniae serotype 7.</title>
        <authorList>
            <person name="Linke B."/>
            <person name="Buettner F."/>
            <person name="Martinez-Arias R."/>
            <person name="Goesmann A."/>
            <person name="Baltes N."/>
            <person name="Tegetmeyer H."/>
            <person name="Singh M."/>
            <person name="Gerlach G.F."/>
        </authorList>
    </citation>
    <scope>NUCLEOTIDE SEQUENCE [LARGE SCALE GENOMIC DNA]</scope>
    <source>
        <strain>AP76</strain>
    </source>
</reference>
<comment type="function">
    <text evidence="1">Involved in unsaturated fatty acids biosynthesis. Catalyzes the dehydration of short chain beta-hydroxyacyl-ACPs and long chain saturated and unsaturated beta-hydroxyacyl-ACPs.</text>
</comment>
<comment type="catalytic activity">
    <reaction evidence="1">
        <text>a (3R)-hydroxyacyl-[ACP] = a (2E)-enoyl-[ACP] + H2O</text>
        <dbReference type="Rhea" id="RHEA:13097"/>
        <dbReference type="Rhea" id="RHEA-COMP:9925"/>
        <dbReference type="Rhea" id="RHEA-COMP:9945"/>
        <dbReference type="ChEBI" id="CHEBI:15377"/>
        <dbReference type="ChEBI" id="CHEBI:78784"/>
        <dbReference type="ChEBI" id="CHEBI:78827"/>
        <dbReference type="EC" id="4.2.1.59"/>
    </reaction>
</comment>
<comment type="subcellular location">
    <subcellularLocation>
        <location evidence="1">Cytoplasm</location>
    </subcellularLocation>
</comment>
<comment type="similarity">
    <text evidence="1">Belongs to the thioester dehydratase family. FabZ subfamily.</text>
</comment>
<gene>
    <name evidence="1" type="primary">fabZ</name>
    <name type="ordered locus">APP7_0432</name>
</gene>
<organism>
    <name type="scientific">Actinobacillus pleuropneumoniae serotype 7 (strain AP76)</name>
    <dbReference type="NCBI Taxonomy" id="537457"/>
    <lineage>
        <taxon>Bacteria</taxon>
        <taxon>Pseudomonadati</taxon>
        <taxon>Pseudomonadota</taxon>
        <taxon>Gammaproteobacteria</taxon>
        <taxon>Pasteurellales</taxon>
        <taxon>Pasteurellaceae</taxon>
        <taxon>Actinobacillus</taxon>
    </lineage>
</organism>
<feature type="chain" id="PRO_1000197270" description="3-hydroxyacyl-[acyl-carrier-protein] dehydratase FabZ">
    <location>
        <begin position="1"/>
        <end position="154"/>
    </location>
</feature>
<feature type="active site" evidence="1">
    <location>
        <position position="60"/>
    </location>
</feature>
<proteinExistence type="inferred from homology"/>
<sequence>MTIEVQENREPKIIEVTEIMKMLPHRYPFLLVDRVIDFEEGKWLKAIKNVTVNEPCFTGHFPESPIFPGVLILEAMAQATGVLAVATHGKMAQDELYYFAAIDNARFKRPVVPGDQLTFEVEFLKEMRGITKFTGKAFVDGKLVCEADLMCARK</sequence>